<evidence type="ECO:0000256" key="1">
    <source>
        <dbReference type="SAM" id="MobiDB-lite"/>
    </source>
</evidence>
<evidence type="ECO:0000269" key="2">
    <source>
    </source>
</evidence>
<evidence type="ECO:0000305" key="3"/>
<evidence type="ECO:0007829" key="4">
    <source>
        <dbReference type="PDB" id="1F32"/>
    </source>
</evidence>
<sequence length="169" mass="18657">MHVWLILSLASLWTSSIAYSQFLFSMSTGPFICTVKDNQVFVANLPWTMLEGDDIQVGKEFAARVEDCTNVKHDMAPTCTKPPPFCGPQDMKMFNFVGCSVLGNKLFIDQKYVRDLTAKDHAEVQTFREKIAAFEEQQENQPPSSGMPHGAVPAGGLSPPPPPSFCTVQ</sequence>
<name>API3_ASCSU</name>
<dbReference type="EMBL" id="AJ224688">
    <property type="protein sequence ID" value="CAA12072.1"/>
    <property type="molecule type" value="mRNA"/>
</dbReference>
<dbReference type="EMBL" id="U77034">
    <property type="protein sequence ID" value="AAB19209.1"/>
    <property type="molecule type" value="mRNA"/>
</dbReference>
<dbReference type="PDB" id="1F32">
    <property type="method" value="X-ray"/>
    <property type="resolution" value="1.75 A"/>
    <property type="chains" value="A=21-169"/>
</dbReference>
<dbReference type="PDB" id="1F34">
    <property type="method" value="X-ray"/>
    <property type="resolution" value="2.45 A"/>
    <property type="chains" value="B=21-169"/>
</dbReference>
<dbReference type="PDBsum" id="1F32"/>
<dbReference type="PDBsum" id="1F34"/>
<dbReference type="SMR" id="P19400"/>
<dbReference type="MINT" id="P19400"/>
<dbReference type="MEROPS" id="I33.001"/>
<dbReference type="EnsemblMetazoa" id="AgR017_g006_t01">
    <property type="protein sequence ID" value="AgR017_g006_t01"/>
    <property type="gene ID" value="AgR017_g006"/>
</dbReference>
<dbReference type="EvolutionaryTrace" id="P19400"/>
<dbReference type="GO" id="GO:0005576">
    <property type="term" value="C:extracellular region"/>
    <property type="evidence" value="ECO:0007669"/>
    <property type="project" value="UniProtKB-SubCell"/>
</dbReference>
<dbReference type="GO" id="GO:0019828">
    <property type="term" value="F:aspartic-type endopeptidase inhibitor activity"/>
    <property type="evidence" value="ECO:0007669"/>
    <property type="project" value="UniProtKB-KW"/>
</dbReference>
<dbReference type="CDD" id="cd00225">
    <property type="entry name" value="API3"/>
    <property type="match status" value="1"/>
</dbReference>
<dbReference type="Gene3D" id="3.30.1120.50">
    <property type="entry name" value="Pepsin inhibitor-3"/>
    <property type="match status" value="2"/>
</dbReference>
<dbReference type="InterPro" id="IPR010480">
    <property type="entry name" value="Pepsin-I3"/>
</dbReference>
<dbReference type="InterPro" id="IPR038412">
    <property type="entry name" value="Pepsin-I3_sf"/>
</dbReference>
<dbReference type="InterPro" id="IPR051901">
    <property type="entry name" value="Protease_Inhibitor_I33"/>
</dbReference>
<dbReference type="PANTHER" id="PTHR37969">
    <property type="entry name" value="PROTEIN CBG07421-RELATED"/>
    <property type="match status" value="1"/>
</dbReference>
<dbReference type="PANTHER" id="PTHR37969:SF1">
    <property type="entry name" value="PROTEIN CBG13105"/>
    <property type="match status" value="1"/>
</dbReference>
<dbReference type="Pfam" id="PF06394">
    <property type="entry name" value="Pepsin-I3"/>
    <property type="match status" value="1"/>
</dbReference>
<dbReference type="SUPFAM" id="SSF55149">
    <property type="entry name" value="Pepsin inhibitor-3"/>
    <property type="match status" value="1"/>
</dbReference>
<accession>P19400</accession>
<reference key="1">
    <citation type="journal article" date="1998" name="Eur. J. Biochem.">
        <title>Molecular cloning, expression and characterization of an Ascaris inhibitor for pepsin and cathepsin E.</title>
        <authorList>
            <person name="Kageyama T."/>
        </authorList>
    </citation>
    <scope>NUCLEOTIDE SEQUENCE [MRNA]</scope>
    <scope>CHARACTERIZATION</scope>
    <source>
        <tissue>Body wall</tissue>
    </source>
</reference>
<reference key="2">
    <citation type="journal article" date="1990" name="Biochemistry">
        <title>Primary structure of the major pepsin inhibitor from the intestinal parasitic nematode Ascaris suum.</title>
        <authorList>
            <person name="Martzen M.R."/>
            <person name="McMullen B.A."/>
            <person name="Smith N.E."/>
            <person name="Fujikawa K."/>
            <person name="Peanasky R.J."/>
        </authorList>
    </citation>
    <scope>PROTEIN SEQUENCE OF 21-169</scope>
    <scope>PYROGLUTAMATE FORMATION AT GLN-21</scope>
    <scope>DISULFIDE BONDS</scope>
</reference>
<reference key="3">
    <citation type="journal article" date="1998" name="Adv. Exp. Med. Biol.">
        <title>Expression, purification, and characterization of the recombinant pepsin inhibitor from Ascaris suum.</title>
        <authorList>
            <person name="Zalatoris J."/>
            <person name="Rao-Naik C."/>
            <person name="Fecho G."/>
            <person name="Girdwood K."/>
            <person name="Kay J."/>
            <person name="Dunn B.M."/>
        </authorList>
    </citation>
    <scope>NUCLEOTIDE SEQUENCE [MRNA] OF 36-169</scope>
</reference>
<reference key="4">
    <citation type="journal article" date="2000" name="Nat. Struct. Biol.">
        <title>Structural basis for the inhibition of porcine pepsin by Ascaris pepsin inhibitor-3.</title>
        <authorList>
            <person name="Ng K.K."/>
            <person name="Petersen J.F."/>
            <person name="Cherney M.M."/>
            <person name="Garen C."/>
            <person name="Zalatoris J.J."/>
            <person name="Rao-Naik C."/>
            <person name="Dunn B.M."/>
            <person name="Martzen M.R."/>
            <person name="Peanasky R.J."/>
            <person name="James M.N."/>
        </authorList>
    </citation>
    <scope>X-RAY CRYSTALLOGRAPHY (1.75 ANGSTROMS) IN COMPLEX WITH PIG PEPSIN</scope>
</reference>
<protein>
    <recommendedName>
        <fullName>Major pepsin inhibitor 3</fullName>
        <shortName>PI-3</shortName>
    </recommendedName>
</protein>
<proteinExistence type="evidence at protein level"/>
<comment type="function">
    <text>This is an inhibitor of the aspartic protease pepsin.</text>
</comment>
<comment type="subcellular location">
    <subcellularLocation>
        <location>Secreted</location>
    </subcellularLocation>
</comment>
<comment type="tissue specificity">
    <text>Body wall.</text>
</comment>
<comment type="similarity">
    <text evidence="3">Belongs to the protease inhibitor I33 family.</text>
</comment>
<keyword id="KW-0002">3D-structure</keyword>
<keyword id="KW-0062">Aspartic protease inhibitor</keyword>
<keyword id="KW-0903">Direct protein sequencing</keyword>
<keyword id="KW-1015">Disulfide bond</keyword>
<keyword id="KW-0646">Protease inhibitor</keyword>
<keyword id="KW-0873">Pyrrolidone carboxylic acid</keyword>
<keyword id="KW-0964">Secreted</keyword>
<keyword id="KW-0732">Signal</keyword>
<feature type="signal peptide" evidence="2">
    <location>
        <begin position="1"/>
        <end position="20"/>
    </location>
</feature>
<feature type="chain" id="PRO_0000002394" description="Major pepsin inhibitor 3">
    <location>
        <begin position="21"/>
        <end position="169"/>
    </location>
</feature>
<feature type="region of interest" description="Disordered" evidence="1">
    <location>
        <begin position="135"/>
        <end position="169"/>
    </location>
</feature>
<feature type="compositionally biased region" description="Pro residues" evidence="1">
    <location>
        <begin position="158"/>
        <end position="169"/>
    </location>
</feature>
<feature type="modified residue" description="Pyrrolidone carboxylic acid" evidence="2">
    <location>
        <position position="21"/>
    </location>
</feature>
<feature type="disulfide bond" evidence="2">
    <location>
        <begin position="33"/>
        <end position="79"/>
    </location>
</feature>
<feature type="disulfide bond" evidence="2">
    <location>
        <begin position="68"/>
        <end position="86"/>
    </location>
</feature>
<feature type="disulfide bond" evidence="2">
    <location>
        <begin position="99"/>
        <end position="166"/>
    </location>
</feature>
<feature type="strand" evidence="4">
    <location>
        <begin position="25"/>
        <end position="29"/>
    </location>
</feature>
<feature type="strand" evidence="4">
    <location>
        <begin position="33"/>
        <end position="36"/>
    </location>
</feature>
<feature type="strand" evidence="4">
    <location>
        <begin position="39"/>
        <end position="42"/>
    </location>
</feature>
<feature type="strand" evidence="4">
    <location>
        <begin position="45"/>
        <end position="49"/>
    </location>
</feature>
<feature type="helix" evidence="4">
    <location>
        <begin position="52"/>
        <end position="54"/>
    </location>
</feature>
<feature type="helix" evidence="4">
    <location>
        <begin position="55"/>
        <end position="70"/>
    </location>
</feature>
<feature type="helix" evidence="4">
    <location>
        <begin position="77"/>
        <end position="80"/>
    </location>
</feature>
<feature type="helix" evidence="4">
    <location>
        <begin position="84"/>
        <end position="86"/>
    </location>
</feature>
<feature type="strand" evidence="4">
    <location>
        <begin position="92"/>
        <end position="96"/>
    </location>
</feature>
<feature type="strand" evidence="4">
    <location>
        <begin position="99"/>
        <end position="102"/>
    </location>
</feature>
<feature type="strand" evidence="4">
    <location>
        <begin position="105"/>
        <end position="108"/>
    </location>
</feature>
<feature type="strand" evidence="4">
    <location>
        <begin position="111"/>
        <end position="115"/>
    </location>
</feature>
<feature type="helix" evidence="4">
    <location>
        <begin position="118"/>
        <end position="136"/>
    </location>
</feature>
<feature type="helix" evidence="4">
    <location>
        <begin position="164"/>
        <end position="166"/>
    </location>
</feature>
<organism>
    <name type="scientific">Ascaris suum</name>
    <name type="common">Pig roundworm</name>
    <name type="synonym">Ascaris lumbricoides</name>
    <dbReference type="NCBI Taxonomy" id="6253"/>
    <lineage>
        <taxon>Eukaryota</taxon>
        <taxon>Metazoa</taxon>
        <taxon>Ecdysozoa</taxon>
        <taxon>Nematoda</taxon>
        <taxon>Chromadorea</taxon>
        <taxon>Rhabditida</taxon>
        <taxon>Spirurina</taxon>
        <taxon>Ascaridomorpha</taxon>
        <taxon>Ascaridoidea</taxon>
        <taxon>Ascarididae</taxon>
        <taxon>Ascaris</taxon>
    </lineage>
</organism>